<organism>
    <name type="scientific">Brucella melitensis biotype 2 (strain ATCC 23457)</name>
    <dbReference type="NCBI Taxonomy" id="546272"/>
    <lineage>
        <taxon>Bacteria</taxon>
        <taxon>Pseudomonadati</taxon>
        <taxon>Pseudomonadota</taxon>
        <taxon>Alphaproteobacteria</taxon>
        <taxon>Hyphomicrobiales</taxon>
        <taxon>Brucellaceae</taxon>
        <taxon>Brucella/Ochrobactrum group</taxon>
        <taxon>Brucella</taxon>
    </lineage>
</organism>
<comment type="function">
    <text evidence="1">Catalyzes the cyclization of GTP to (8S)-3',8-cyclo-7,8-dihydroguanosine 5'-triphosphate.</text>
</comment>
<comment type="catalytic activity">
    <reaction evidence="1">
        <text>GTP + AH2 + S-adenosyl-L-methionine = (8S)-3',8-cyclo-7,8-dihydroguanosine 5'-triphosphate + 5'-deoxyadenosine + L-methionine + A + H(+)</text>
        <dbReference type="Rhea" id="RHEA:49576"/>
        <dbReference type="ChEBI" id="CHEBI:13193"/>
        <dbReference type="ChEBI" id="CHEBI:15378"/>
        <dbReference type="ChEBI" id="CHEBI:17319"/>
        <dbReference type="ChEBI" id="CHEBI:17499"/>
        <dbReference type="ChEBI" id="CHEBI:37565"/>
        <dbReference type="ChEBI" id="CHEBI:57844"/>
        <dbReference type="ChEBI" id="CHEBI:59789"/>
        <dbReference type="ChEBI" id="CHEBI:131766"/>
        <dbReference type="EC" id="4.1.99.22"/>
    </reaction>
</comment>
<comment type="cofactor">
    <cofactor evidence="1">
        <name>[4Fe-4S] cluster</name>
        <dbReference type="ChEBI" id="CHEBI:49883"/>
    </cofactor>
    <text evidence="1">Binds 2 [4Fe-4S] clusters. Binds 1 [4Fe-4S] cluster coordinated with 3 cysteines and an exchangeable S-adenosyl-L-methionine and 1 [4Fe-4S] cluster coordinated with 3 cysteines and the GTP-derived substrate.</text>
</comment>
<comment type="pathway">
    <text evidence="1">Cofactor biosynthesis; molybdopterin biosynthesis.</text>
</comment>
<comment type="subunit">
    <text evidence="1">Monomer and homodimer.</text>
</comment>
<comment type="similarity">
    <text evidence="1">Belongs to the radical SAM superfamily. MoaA family.</text>
</comment>
<evidence type="ECO:0000255" key="1">
    <source>
        <dbReference type="HAMAP-Rule" id="MF_01225"/>
    </source>
</evidence>
<evidence type="ECO:0000255" key="2">
    <source>
        <dbReference type="PROSITE-ProRule" id="PRU01266"/>
    </source>
</evidence>
<keyword id="KW-0004">4Fe-4S</keyword>
<keyword id="KW-0342">GTP-binding</keyword>
<keyword id="KW-0408">Iron</keyword>
<keyword id="KW-0411">Iron-sulfur</keyword>
<keyword id="KW-0456">Lyase</keyword>
<keyword id="KW-0479">Metal-binding</keyword>
<keyword id="KW-0501">Molybdenum cofactor biosynthesis</keyword>
<keyword id="KW-0547">Nucleotide-binding</keyword>
<keyword id="KW-0949">S-adenosyl-L-methionine</keyword>
<feature type="chain" id="PRO_1000164909" description="GTP 3',8-cyclase">
    <location>
        <begin position="1"/>
        <end position="344"/>
    </location>
</feature>
<feature type="domain" description="Radical SAM core" evidence="2">
    <location>
        <begin position="19"/>
        <end position="245"/>
    </location>
</feature>
<feature type="binding site" evidence="1">
    <location>
        <position position="28"/>
    </location>
    <ligand>
        <name>GTP</name>
        <dbReference type="ChEBI" id="CHEBI:37565"/>
    </ligand>
</feature>
<feature type="binding site" evidence="1">
    <location>
        <position position="35"/>
    </location>
    <ligand>
        <name>[4Fe-4S] cluster</name>
        <dbReference type="ChEBI" id="CHEBI:49883"/>
        <label>1</label>
        <note>4Fe-4S-S-AdoMet</note>
    </ligand>
</feature>
<feature type="binding site" evidence="1">
    <location>
        <position position="39"/>
    </location>
    <ligand>
        <name>[4Fe-4S] cluster</name>
        <dbReference type="ChEBI" id="CHEBI:49883"/>
        <label>1</label>
        <note>4Fe-4S-S-AdoMet</note>
    </ligand>
</feature>
<feature type="binding site" evidence="1">
    <location>
        <position position="41"/>
    </location>
    <ligand>
        <name>S-adenosyl-L-methionine</name>
        <dbReference type="ChEBI" id="CHEBI:59789"/>
    </ligand>
</feature>
<feature type="binding site" evidence="1">
    <location>
        <position position="42"/>
    </location>
    <ligand>
        <name>[4Fe-4S] cluster</name>
        <dbReference type="ChEBI" id="CHEBI:49883"/>
        <label>1</label>
        <note>4Fe-4S-S-AdoMet</note>
    </ligand>
</feature>
<feature type="binding site" evidence="1">
    <location>
        <position position="77"/>
    </location>
    <ligand>
        <name>GTP</name>
        <dbReference type="ChEBI" id="CHEBI:37565"/>
    </ligand>
</feature>
<feature type="binding site" evidence="1">
    <location>
        <position position="81"/>
    </location>
    <ligand>
        <name>S-adenosyl-L-methionine</name>
        <dbReference type="ChEBI" id="CHEBI:59789"/>
    </ligand>
</feature>
<feature type="binding site" evidence="1">
    <location>
        <position position="111"/>
    </location>
    <ligand>
        <name>GTP</name>
        <dbReference type="ChEBI" id="CHEBI:37565"/>
    </ligand>
</feature>
<feature type="binding site" evidence="1">
    <location>
        <position position="135"/>
    </location>
    <ligand>
        <name>S-adenosyl-L-methionine</name>
        <dbReference type="ChEBI" id="CHEBI:59789"/>
    </ligand>
</feature>
<feature type="binding site" evidence="1">
    <location>
        <position position="171"/>
    </location>
    <ligand>
        <name>GTP</name>
        <dbReference type="ChEBI" id="CHEBI:37565"/>
    </ligand>
</feature>
<feature type="binding site" evidence="1">
    <location>
        <position position="205"/>
    </location>
    <ligand>
        <name>S-adenosyl-L-methionine</name>
        <dbReference type="ChEBI" id="CHEBI:59789"/>
    </ligand>
</feature>
<feature type="binding site" evidence="1">
    <location>
        <position position="268"/>
    </location>
    <ligand>
        <name>[4Fe-4S] cluster</name>
        <dbReference type="ChEBI" id="CHEBI:49883"/>
        <label>2</label>
        <note>4Fe-4S-substrate</note>
    </ligand>
</feature>
<feature type="binding site" evidence="1">
    <location>
        <position position="271"/>
    </location>
    <ligand>
        <name>[4Fe-4S] cluster</name>
        <dbReference type="ChEBI" id="CHEBI:49883"/>
        <label>2</label>
        <note>4Fe-4S-substrate</note>
    </ligand>
</feature>
<feature type="binding site" evidence="1">
    <location>
        <begin position="273"/>
        <end position="275"/>
    </location>
    <ligand>
        <name>GTP</name>
        <dbReference type="ChEBI" id="CHEBI:37565"/>
    </ligand>
</feature>
<feature type="binding site" evidence="1">
    <location>
        <position position="285"/>
    </location>
    <ligand>
        <name>[4Fe-4S] cluster</name>
        <dbReference type="ChEBI" id="CHEBI:49883"/>
        <label>2</label>
        <note>4Fe-4S-substrate</note>
    </ligand>
</feature>
<proteinExistence type="inferred from homology"/>
<gene>
    <name evidence="1" type="primary">moaA</name>
    <name type="ordered locus">BMEA_A0992</name>
</gene>
<name>MOAA_BRUMB</name>
<reference key="1">
    <citation type="submission" date="2009-03" db="EMBL/GenBank/DDBJ databases">
        <title>Brucella melitensis ATCC 23457 whole genome shotgun sequencing project.</title>
        <authorList>
            <person name="Setubal J.C."/>
            <person name="Boyle S."/>
            <person name="Crasta O.R."/>
            <person name="Gillespie J.J."/>
            <person name="Kenyon R.W."/>
            <person name="Lu J."/>
            <person name="Mane S."/>
            <person name="Nagrani S."/>
            <person name="Shallom J.M."/>
            <person name="Shallom S."/>
            <person name="Shukla M."/>
            <person name="Snyder E.E."/>
            <person name="Sobral B.W."/>
            <person name="Wattam A.R."/>
            <person name="Will R."/>
            <person name="Williams K."/>
            <person name="Yoo H."/>
            <person name="Munk C."/>
            <person name="Tapia R."/>
            <person name="Han C."/>
            <person name="Detter J.C."/>
            <person name="Bruce D."/>
            <person name="Brettin T.S."/>
        </authorList>
    </citation>
    <scope>NUCLEOTIDE SEQUENCE [LARGE SCALE GENOMIC DNA]</scope>
    <source>
        <strain>ATCC 23457</strain>
    </source>
</reference>
<accession>C0RIT4</accession>
<protein>
    <recommendedName>
        <fullName evidence="1">GTP 3',8-cyclase</fullName>
        <ecNumber evidence="1">4.1.99.22</ecNumber>
    </recommendedName>
    <alternativeName>
        <fullName evidence="1">Molybdenum cofactor biosynthesis protein A</fullName>
    </alternativeName>
</protein>
<sequence>MRNVQAQPLVSPTEPMIDPFGRAVTYLRVSVTDRCDFRCTYCMAEHMTFLPKKDLLTLEELDRLCSVFIEKGVRKLRLTGGEPLVRKNIMHLIGNLSRHLKSGALDELTLTTNGSQLARFAGELADCGVRRINVSLDTLNPEKFRTITRWGDLSRVLEGIDAAQKAGIHVKINAVALKDFNDAEIPELIRWAHGRGMDVTLIETMPMGEIEFDRTDQYLPLSQVRADLASQFTLADIPYRTGGPARYVTISETGGRLGFITPMTYNFCESCNRVRLTCTGMLYMCLGQNDDADLRKALRESESDEHLSQAIDEAISRKPKGHDFIIDREHNRPSVARHMSLTGG</sequence>
<dbReference type="EC" id="4.1.99.22" evidence="1"/>
<dbReference type="EMBL" id="CP001488">
    <property type="protein sequence ID" value="ACO00742.1"/>
    <property type="molecule type" value="Genomic_DNA"/>
</dbReference>
<dbReference type="RefSeq" id="WP_004683730.1">
    <property type="nucleotide sequence ID" value="NC_012441.1"/>
</dbReference>
<dbReference type="SMR" id="C0RIT4"/>
<dbReference type="GeneID" id="29593845"/>
<dbReference type="KEGG" id="bmi:BMEA_A0992"/>
<dbReference type="HOGENOM" id="CLU_009273_0_1_5"/>
<dbReference type="UniPathway" id="UPA00344"/>
<dbReference type="Proteomes" id="UP000001748">
    <property type="component" value="Chromosome I"/>
</dbReference>
<dbReference type="GO" id="GO:0051539">
    <property type="term" value="F:4 iron, 4 sulfur cluster binding"/>
    <property type="evidence" value="ECO:0007669"/>
    <property type="project" value="UniProtKB-UniRule"/>
</dbReference>
<dbReference type="GO" id="GO:0061799">
    <property type="term" value="F:cyclic pyranopterin monophosphate synthase activity"/>
    <property type="evidence" value="ECO:0007669"/>
    <property type="project" value="TreeGrafter"/>
</dbReference>
<dbReference type="GO" id="GO:0061798">
    <property type="term" value="F:GTP 3',8'-cyclase activity"/>
    <property type="evidence" value="ECO:0007669"/>
    <property type="project" value="UniProtKB-UniRule"/>
</dbReference>
<dbReference type="GO" id="GO:0005525">
    <property type="term" value="F:GTP binding"/>
    <property type="evidence" value="ECO:0007669"/>
    <property type="project" value="UniProtKB-UniRule"/>
</dbReference>
<dbReference type="GO" id="GO:0046872">
    <property type="term" value="F:metal ion binding"/>
    <property type="evidence" value="ECO:0007669"/>
    <property type="project" value="UniProtKB-KW"/>
</dbReference>
<dbReference type="GO" id="GO:1904047">
    <property type="term" value="F:S-adenosyl-L-methionine binding"/>
    <property type="evidence" value="ECO:0007669"/>
    <property type="project" value="UniProtKB-UniRule"/>
</dbReference>
<dbReference type="GO" id="GO:0006777">
    <property type="term" value="P:Mo-molybdopterin cofactor biosynthetic process"/>
    <property type="evidence" value="ECO:0007669"/>
    <property type="project" value="UniProtKB-UniRule"/>
</dbReference>
<dbReference type="CDD" id="cd01335">
    <property type="entry name" value="Radical_SAM"/>
    <property type="match status" value="1"/>
</dbReference>
<dbReference type="CDD" id="cd21117">
    <property type="entry name" value="Twitch_MoaA"/>
    <property type="match status" value="1"/>
</dbReference>
<dbReference type="Gene3D" id="3.20.20.70">
    <property type="entry name" value="Aldolase class I"/>
    <property type="match status" value="1"/>
</dbReference>
<dbReference type="HAMAP" id="MF_01225_B">
    <property type="entry name" value="MoaA_B"/>
    <property type="match status" value="1"/>
</dbReference>
<dbReference type="InterPro" id="IPR013785">
    <property type="entry name" value="Aldolase_TIM"/>
</dbReference>
<dbReference type="InterPro" id="IPR006638">
    <property type="entry name" value="Elp3/MiaA/NifB-like_rSAM"/>
</dbReference>
<dbReference type="InterPro" id="IPR013483">
    <property type="entry name" value="MoaA"/>
</dbReference>
<dbReference type="InterPro" id="IPR000385">
    <property type="entry name" value="MoaA_NifB_PqqE_Fe-S-bd_CS"/>
</dbReference>
<dbReference type="InterPro" id="IPR010505">
    <property type="entry name" value="MoaA_twitch"/>
</dbReference>
<dbReference type="InterPro" id="IPR050105">
    <property type="entry name" value="MoCo_biosynth_MoaA/MoaC"/>
</dbReference>
<dbReference type="InterPro" id="IPR007197">
    <property type="entry name" value="rSAM"/>
</dbReference>
<dbReference type="NCBIfam" id="TIGR02666">
    <property type="entry name" value="moaA"/>
    <property type="match status" value="1"/>
</dbReference>
<dbReference type="PANTHER" id="PTHR22960:SF0">
    <property type="entry name" value="MOLYBDENUM COFACTOR BIOSYNTHESIS PROTEIN 1"/>
    <property type="match status" value="1"/>
</dbReference>
<dbReference type="PANTHER" id="PTHR22960">
    <property type="entry name" value="MOLYBDOPTERIN COFACTOR SYNTHESIS PROTEIN A"/>
    <property type="match status" value="1"/>
</dbReference>
<dbReference type="Pfam" id="PF13353">
    <property type="entry name" value="Fer4_12"/>
    <property type="match status" value="1"/>
</dbReference>
<dbReference type="Pfam" id="PF06463">
    <property type="entry name" value="Mob_synth_C"/>
    <property type="match status" value="1"/>
</dbReference>
<dbReference type="Pfam" id="PF04055">
    <property type="entry name" value="Radical_SAM"/>
    <property type="match status" value="1"/>
</dbReference>
<dbReference type="SFLD" id="SFLDG01383">
    <property type="entry name" value="cyclic_pyranopterin_phosphate"/>
    <property type="match status" value="1"/>
</dbReference>
<dbReference type="SFLD" id="SFLDG01386">
    <property type="entry name" value="main_SPASM_domain-containing"/>
    <property type="match status" value="1"/>
</dbReference>
<dbReference type="SMART" id="SM00729">
    <property type="entry name" value="Elp3"/>
    <property type="match status" value="1"/>
</dbReference>
<dbReference type="SUPFAM" id="SSF102114">
    <property type="entry name" value="Radical SAM enzymes"/>
    <property type="match status" value="1"/>
</dbReference>
<dbReference type="PROSITE" id="PS01305">
    <property type="entry name" value="MOAA_NIFB_PQQE"/>
    <property type="match status" value="1"/>
</dbReference>
<dbReference type="PROSITE" id="PS51918">
    <property type="entry name" value="RADICAL_SAM"/>
    <property type="match status" value="1"/>
</dbReference>